<accession>B6HI95</accession>
<sequence>MASATVTKTNIGVYTNPKHDLWIADSSPTAEDINAGKGLKAGEVTIEVRSTGICGSDVHFWHAGCIGPMIVTGDHVLGHESAGQVLAVAPDVTHLKVGDRVAVEPNVICNACEPCLTGRYNGCVNVAFLSTPPVDGLLRRYVNHPAVWCHKIGDMSYEDGAMLEPLSVTLAAIERSGLRLGDPLLITGAGPIGLISLLSARAAGACPIVITDIDEGRLAFAKSLVPEVRTYKVEIGKSAEECADGIINALNDGQGSGPDALRPKLALECTGVESSVNSAIWSVKFGGKVFVIGVGKNEMTIPFMRLSTQEIDLQYQYRYCNTWPRAIRLIQNGVIDLSKLVTHRYSLENALQAFETASNPKTGAIKVQIMSSEEDVKAATAGQKY</sequence>
<name>LAD_PENRW</name>
<keyword id="KW-0054">Arabinose catabolism</keyword>
<keyword id="KW-0119">Carbohydrate metabolism</keyword>
<keyword id="KW-0479">Metal-binding</keyword>
<keyword id="KW-0520">NAD</keyword>
<keyword id="KW-0547">Nucleotide-binding</keyword>
<keyword id="KW-0560">Oxidoreductase</keyword>
<keyword id="KW-1185">Reference proteome</keyword>
<keyword id="KW-0862">Zinc</keyword>
<reference key="1">
    <citation type="journal article" date="2008" name="Nat. Biotechnol.">
        <title>Genome sequencing and analysis of the filamentous fungus Penicillium chrysogenum.</title>
        <authorList>
            <person name="van den Berg M.A."/>
            <person name="Albang R."/>
            <person name="Albermann K."/>
            <person name="Badger J.H."/>
            <person name="Daran J.-M."/>
            <person name="Driessen A.J.M."/>
            <person name="Garcia-Estrada C."/>
            <person name="Fedorova N.D."/>
            <person name="Harris D.M."/>
            <person name="Heijne W.H.M."/>
            <person name="Joardar V.S."/>
            <person name="Kiel J.A.K.W."/>
            <person name="Kovalchuk A."/>
            <person name="Martin J.F."/>
            <person name="Nierman W.C."/>
            <person name="Nijland J.G."/>
            <person name="Pronk J.T."/>
            <person name="Roubos J.A."/>
            <person name="van der Klei I.J."/>
            <person name="van Peij N.N.M.E."/>
            <person name="Veenhuis M."/>
            <person name="von Doehren H."/>
            <person name="Wagner C."/>
            <person name="Wortman J.R."/>
            <person name="Bovenberg R.A.L."/>
        </authorList>
    </citation>
    <scope>NUCLEOTIDE SEQUENCE [LARGE SCALE GENOMIC DNA]</scope>
    <source>
        <strain>ATCC 28089 / DSM 1075 / NRRL 1951 / Wisconsin 54-1255</strain>
    </source>
</reference>
<reference key="2">
    <citation type="journal article" date="2010" name="Appl. Microbiol. Biotechnol.">
        <title>Cloning, characterization, and engineering of fungal L-arabinitol dehydrogenases.</title>
        <authorList>
            <person name="Kim B."/>
            <person name="Sullivan R.P."/>
            <person name="Zhao H."/>
        </authorList>
    </citation>
    <scope>FUNCTION</scope>
    <scope>BIOPHYSICOCHEMICAL PROPERTIES</scope>
    <scope>COFACTOR</scope>
    <scope>SUBUNIT</scope>
    <scope>MUTAGENESIS OF 212-ASP-ILE-213 AND SER-358</scope>
    <scope>ZINC-BINDING</scope>
    <scope>CATALYTIC ACTIVITY</scope>
</reference>
<organism>
    <name type="scientific">Penicillium rubens (strain ATCC 28089 / DSM 1075 / NRRL 1951 / Wisconsin 54-1255)</name>
    <name type="common">Penicillium chrysogenum</name>
    <dbReference type="NCBI Taxonomy" id="500485"/>
    <lineage>
        <taxon>Eukaryota</taxon>
        <taxon>Fungi</taxon>
        <taxon>Dikarya</taxon>
        <taxon>Ascomycota</taxon>
        <taxon>Pezizomycotina</taxon>
        <taxon>Eurotiomycetes</taxon>
        <taxon>Eurotiomycetidae</taxon>
        <taxon>Eurotiales</taxon>
        <taxon>Aspergillaceae</taxon>
        <taxon>Penicillium</taxon>
        <taxon>Penicillium chrysogenum species complex</taxon>
    </lineage>
</organism>
<protein>
    <recommendedName>
        <fullName>L-arabinitol 4-dehydrogenase</fullName>
        <shortName>LAD</shortName>
        <ecNumber evidence="2">1.1.1.12</ecNumber>
    </recommendedName>
</protein>
<comment type="function">
    <text evidence="2">Catalyzes the NAD-dependent oxidation of L-arabinitol to L-xylulose in the fungal L-arabinose catabolic pathway. L-arabinose catabolism is important for using plant material as a carbon source. NADP cannot act as a cosubstrate.</text>
</comment>
<comment type="catalytic activity">
    <reaction evidence="2">
        <text>L-arabinitol + NAD(+) = L-xylulose + NADH + H(+)</text>
        <dbReference type="Rhea" id="RHEA:16381"/>
        <dbReference type="ChEBI" id="CHEBI:15378"/>
        <dbReference type="ChEBI" id="CHEBI:17399"/>
        <dbReference type="ChEBI" id="CHEBI:18403"/>
        <dbReference type="ChEBI" id="CHEBI:57540"/>
        <dbReference type="ChEBI" id="CHEBI:57945"/>
        <dbReference type="EC" id="1.1.1.12"/>
    </reaction>
</comment>
<comment type="cofactor">
    <cofactor evidence="2">
        <name>Zn(2+)</name>
        <dbReference type="ChEBI" id="CHEBI:29105"/>
    </cofactor>
    <text evidence="2">Binds 2 Zn(2+) ions per subunit.</text>
</comment>
<comment type="biophysicochemical properties">
    <kinetics>
        <KM evidence="2">37 mM for L-arabinitol (at pH 7)</KM>
        <KM evidence="2">300 uM for NAD (at pH 7)</KM>
    </kinetics>
    <phDependence>
        <text evidence="2">Optimum pH is 9.4. Active from pH 7 to pH 11.</text>
    </phDependence>
    <temperatureDependence>
        <text evidence="2">Optimum temperature is 40-50 degrees Celsius.</text>
    </temperatureDependence>
</comment>
<comment type="pathway">
    <text>Carbohydrate degradation; L-arabinose degradation via L-arabinitol; D-xylulose 5-phosphate from L-arabinose (fungal route): step 2/5.</text>
</comment>
<comment type="subunit">
    <text evidence="2">Homotetramer.</text>
</comment>
<comment type="similarity">
    <text evidence="3">Belongs to the zinc-containing alcohol dehydrogenase family.</text>
</comment>
<gene>
    <name type="primary">lad1</name>
    <name type="ORF">Pc21g23190</name>
</gene>
<feature type="chain" id="PRO_0000418407" description="L-arabinitol 4-dehydrogenase">
    <location>
        <begin position="1"/>
        <end position="385"/>
    </location>
</feature>
<feature type="binding site" evidence="1">
    <location>
        <position position="54"/>
    </location>
    <ligand>
        <name>Zn(2+)</name>
        <dbReference type="ChEBI" id="CHEBI:29105"/>
        <label>1</label>
        <note>catalytic</note>
    </ligand>
</feature>
<feature type="binding site" evidence="1">
    <location>
        <position position="79"/>
    </location>
    <ligand>
        <name>Zn(2+)</name>
        <dbReference type="ChEBI" id="CHEBI:29105"/>
        <label>1</label>
        <note>catalytic</note>
    </ligand>
</feature>
<feature type="binding site" evidence="1">
    <location>
        <position position="80"/>
    </location>
    <ligand>
        <name>Zn(2+)</name>
        <dbReference type="ChEBI" id="CHEBI:29105"/>
        <label>1</label>
        <note>catalytic</note>
    </ligand>
</feature>
<feature type="binding site" evidence="1">
    <location>
        <position position="109"/>
    </location>
    <ligand>
        <name>Zn(2+)</name>
        <dbReference type="ChEBI" id="CHEBI:29105"/>
        <label>2</label>
        <note>structural</note>
    </ligand>
</feature>
<feature type="binding site" evidence="1">
    <location>
        <position position="112"/>
    </location>
    <ligand>
        <name>Zn(2+)</name>
        <dbReference type="ChEBI" id="CHEBI:29105"/>
        <label>2</label>
        <note>structural</note>
    </ligand>
</feature>
<feature type="binding site" evidence="1">
    <location>
        <position position="115"/>
    </location>
    <ligand>
        <name>Zn(2+)</name>
        <dbReference type="ChEBI" id="CHEBI:29105"/>
        <label>2</label>
        <note>structural</note>
    </ligand>
</feature>
<feature type="binding site" evidence="1">
    <location>
        <position position="123"/>
    </location>
    <ligand>
        <name>Zn(2+)</name>
        <dbReference type="ChEBI" id="CHEBI:29105"/>
        <label>2</label>
        <note>structural</note>
    </ligand>
</feature>
<feature type="binding site" evidence="1">
    <location>
        <position position="164"/>
    </location>
    <ligand>
        <name>Zn(2+)</name>
        <dbReference type="ChEBI" id="CHEBI:29105"/>
        <label>1</label>
        <note>catalytic</note>
    </ligand>
</feature>
<feature type="binding site" evidence="1">
    <location>
        <begin position="191"/>
        <end position="192"/>
    </location>
    <ligand>
        <name>NAD(+)</name>
        <dbReference type="ChEBI" id="CHEBI:57540"/>
    </ligand>
</feature>
<feature type="binding site" evidence="1">
    <location>
        <position position="212"/>
    </location>
    <ligand>
        <name>NAD(+)</name>
        <dbReference type="ChEBI" id="CHEBI:57540"/>
    </ligand>
</feature>
<feature type="binding site" evidence="1">
    <location>
        <position position="217"/>
    </location>
    <ligand>
        <name>NAD(+)</name>
        <dbReference type="ChEBI" id="CHEBI:57540"/>
    </ligand>
</feature>
<feature type="binding site" evidence="1">
    <location>
        <position position="292"/>
    </location>
    <ligand>
        <name>NAD(+)</name>
        <dbReference type="ChEBI" id="CHEBI:57540"/>
    </ligand>
</feature>
<feature type="binding site" evidence="1">
    <location>
        <begin position="316"/>
        <end position="318"/>
    </location>
    <ligand>
        <name>NAD(+)</name>
        <dbReference type="ChEBI" id="CHEBI:57540"/>
    </ligand>
</feature>
<feature type="mutagenesis site" description="Alters cofactor specificity from NAD to NADP; when associated with T-358." evidence="2">
    <original>DI</original>
    <variation>SR</variation>
    <location>
        <begin position="212"/>
        <end position="213"/>
    </location>
</feature>
<feature type="mutagenesis site" description="Alters cofactor specificity from NAD to NADP; when associated with 212-SR-213." evidence="2">
    <original>S</original>
    <variation>T</variation>
    <location>
        <position position="358"/>
    </location>
</feature>
<dbReference type="EC" id="1.1.1.12" evidence="2"/>
<dbReference type="EMBL" id="AM920436">
    <property type="protein sequence ID" value="CAP97216.1"/>
    <property type="molecule type" value="Genomic_DNA"/>
</dbReference>
<dbReference type="RefSeq" id="XP_002569286.1">
    <property type="nucleotide sequence ID" value="XM_002569240.1"/>
</dbReference>
<dbReference type="SMR" id="B6HI95"/>
<dbReference type="STRING" id="500485.B6HI95"/>
<dbReference type="GeneID" id="8310191"/>
<dbReference type="KEGG" id="pcs:N7525_006247"/>
<dbReference type="VEuPathDB" id="FungiDB:PCH_Pc21g23190"/>
<dbReference type="eggNOG" id="KOG0024">
    <property type="taxonomic scope" value="Eukaryota"/>
</dbReference>
<dbReference type="HOGENOM" id="CLU_026673_11_5_1"/>
<dbReference type="OMA" id="MRVAMYY"/>
<dbReference type="OrthoDB" id="2148442at2759"/>
<dbReference type="BioCyc" id="PCHR:PC21G23190-MONOMER"/>
<dbReference type="BRENDA" id="1.1.1.12">
    <property type="organism ID" value="4606"/>
</dbReference>
<dbReference type="UniPathway" id="UPA00146">
    <property type="reaction ID" value="UER00575"/>
</dbReference>
<dbReference type="Proteomes" id="UP000000724">
    <property type="component" value="Contig Pc00c21"/>
</dbReference>
<dbReference type="GO" id="GO:0050019">
    <property type="term" value="F:L-arabinitol 4-dehydrogenase activity"/>
    <property type="evidence" value="ECO:0000314"/>
    <property type="project" value="UniProtKB"/>
</dbReference>
<dbReference type="GO" id="GO:0003939">
    <property type="term" value="F:L-iditol 2-dehydrogenase (NAD+) activity"/>
    <property type="evidence" value="ECO:0007669"/>
    <property type="project" value="TreeGrafter"/>
</dbReference>
<dbReference type="GO" id="GO:0000166">
    <property type="term" value="F:nucleotide binding"/>
    <property type="evidence" value="ECO:0007669"/>
    <property type="project" value="UniProtKB-KW"/>
</dbReference>
<dbReference type="GO" id="GO:0008270">
    <property type="term" value="F:zinc ion binding"/>
    <property type="evidence" value="ECO:0007669"/>
    <property type="project" value="InterPro"/>
</dbReference>
<dbReference type="GO" id="GO:0019569">
    <property type="term" value="P:L-arabinose catabolic process to xylulose 5-phosphate"/>
    <property type="evidence" value="ECO:0007669"/>
    <property type="project" value="UniProtKB-UniPathway"/>
</dbReference>
<dbReference type="GO" id="GO:0006062">
    <property type="term" value="P:sorbitol catabolic process"/>
    <property type="evidence" value="ECO:0007669"/>
    <property type="project" value="TreeGrafter"/>
</dbReference>
<dbReference type="CDD" id="cd05285">
    <property type="entry name" value="sorbitol_DH"/>
    <property type="match status" value="1"/>
</dbReference>
<dbReference type="FunFam" id="3.40.50.720:FF:000068">
    <property type="entry name" value="Sorbitol dehydrogenase"/>
    <property type="match status" value="1"/>
</dbReference>
<dbReference type="Gene3D" id="3.90.180.10">
    <property type="entry name" value="Medium-chain alcohol dehydrogenases, catalytic domain"/>
    <property type="match status" value="1"/>
</dbReference>
<dbReference type="Gene3D" id="3.40.50.720">
    <property type="entry name" value="NAD(P)-binding Rossmann-like Domain"/>
    <property type="match status" value="1"/>
</dbReference>
<dbReference type="InterPro" id="IPR013149">
    <property type="entry name" value="ADH-like_C"/>
</dbReference>
<dbReference type="InterPro" id="IPR013154">
    <property type="entry name" value="ADH-like_N"/>
</dbReference>
<dbReference type="InterPro" id="IPR002328">
    <property type="entry name" value="ADH_Zn_CS"/>
</dbReference>
<dbReference type="InterPro" id="IPR011032">
    <property type="entry name" value="GroES-like_sf"/>
</dbReference>
<dbReference type="InterPro" id="IPR036291">
    <property type="entry name" value="NAD(P)-bd_dom_sf"/>
</dbReference>
<dbReference type="InterPro" id="IPR020843">
    <property type="entry name" value="PKS_ER"/>
</dbReference>
<dbReference type="InterPro" id="IPR045306">
    <property type="entry name" value="SDH-like"/>
</dbReference>
<dbReference type="PANTHER" id="PTHR43161:SF12">
    <property type="entry name" value="L-ARABINITOL 4-DEHYDROGENASE"/>
    <property type="match status" value="1"/>
</dbReference>
<dbReference type="PANTHER" id="PTHR43161">
    <property type="entry name" value="SORBITOL DEHYDROGENASE"/>
    <property type="match status" value="1"/>
</dbReference>
<dbReference type="Pfam" id="PF08240">
    <property type="entry name" value="ADH_N"/>
    <property type="match status" value="1"/>
</dbReference>
<dbReference type="Pfam" id="PF00107">
    <property type="entry name" value="ADH_zinc_N"/>
    <property type="match status" value="1"/>
</dbReference>
<dbReference type="SMART" id="SM00829">
    <property type="entry name" value="PKS_ER"/>
    <property type="match status" value="1"/>
</dbReference>
<dbReference type="SUPFAM" id="SSF50129">
    <property type="entry name" value="GroES-like"/>
    <property type="match status" value="1"/>
</dbReference>
<dbReference type="SUPFAM" id="SSF51735">
    <property type="entry name" value="NAD(P)-binding Rossmann-fold domains"/>
    <property type="match status" value="1"/>
</dbReference>
<dbReference type="PROSITE" id="PS00059">
    <property type="entry name" value="ADH_ZINC"/>
    <property type="match status" value="1"/>
</dbReference>
<evidence type="ECO:0000250" key="1"/>
<evidence type="ECO:0000269" key="2">
    <source>
    </source>
</evidence>
<evidence type="ECO:0000305" key="3"/>
<proteinExistence type="evidence at protein level"/>